<keyword id="KW-0030">Aminoacyl-tRNA synthetase</keyword>
<keyword id="KW-0067">ATP-binding</keyword>
<keyword id="KW-0963">Cytoplasm</keyword>
<keyword id="KW-0436">Ligase</keyword>
<keyword id="KW-0547">Nucleotide-binding</keyword>
<keyword id="KW-0648">Protein biosynthesis</keyword>
<keyword id="KW-1185">Reference proteome</keyword>
<evidence type="ECO:0000255" key="1">
    <source>
        <dbReference type="HAMAP-Rule" id="MF_00176"/>
    </source>
</evidence>
<gene>
    <name evidence="1" type="primary">serS</name>
    <name type="ordered locus">Daci_1908</name>
</gene>
<name>SYS_DELAS</name>
<feature type="chain" id="PRO_1000098059" description="Serine--tRNA ligase">
    <location>
        <begin position="1"/>
        <end position="438"/>
    </location>
</feature>
<feature type="binding site" evidence="1">
    <location>
        <begin position="245"/>
        <end position="247"/>
    </location>
    <ligand>
        <name>L-serine</name>
        <dbReference type="ChEBI" id="CHEBI:33384"/>
    </ligand>
</feature>
<feature type="binding site" evidence="1">
    <location>
        <begin position="276"/>
        <end position="278"/>
    </location>
    <ligand>
        <name>ATP</name>
        <dbReference type="ChEBI" id="CHEBI:30616"/>
    </ligand>
</feature>
<feature type="binding site" evidence="1">
    <location>
        <position position="299"/>
    </location>
    <ligand>
        <name>L-serine</name>
        <dbReference type="ChEBI" id="CHEBI:33384"/>
    </ligand>
</feature>
<feature type="binding site" evidence="1">
    <location>
        <begin position="363"/>
        <end position="366"/>
    </location>
    <ligand>
        <name>ATP</name>
        <dbReference type="ChEBI" id="CHEBI:30616"/>
    </ligand>
</feature>
<feature type="binding site" evidence="1">
    <location>
        <position position="398"/>
    </location>
    <ligand>
        <name>L-serine</name>
        <dbReference type="ChEBI" id="CHEBI:33384"/>
    </ligand>
</feature>
<protein>
    <recommendedName>
        <fullName evidence="1">Serine--tRNA ligase</fullName>
        <ecNumber evidence="1">6.1.1.11</ecNumber>
    </recommendedName>
    <alternativeName>
        <fullName evidence="1">Seryl-tRNA synthetase</fullName>
        <shortName evidence="1">SerRS</shortName>
    </alternativeName>
    <alternativeName>
        <fullName evidence="1">Seryl-tRNA(Ser/Sec) synthetase</fullName>
    </alternativeName>
</protein>
<proteinExistence type="inferred from homology"/>
<organism>
    <name type="scientific">Delftia acidovorans (strain DSM 14801 / SPH-1)</name>
    <dbReference type="NCBI Taxonomy" id="398578"/>
    <lineage>
        <taxon>Bacteria</taxon>
        <taxon>Pseudomonadati</taxon>
        <taxon>Pseudomonadota</taxon>
        <taxon>Betaproteobacteria</taxon>
        <taxon>Burkholderiales</taxon>
        <taxon>Comamonadaceae</taxon>
        <taxon>Delftia</taxon>
    </lineage>
</organism>
<sequence length="438" mass="48209">MLDILLLRKDLDSAVARLETRKKPQAFLNVEAFQSLEAERKSLQTRTEELQSKRNQLSKQIGMLMGKGEKDAAEAAKAEVGSLKTELDQSATRLEQIQGELQTMLLAVPNLPHDSVPVGADESGNVEARRWGTPKTFDFEVKDHVDVGQPLGLDFDMGVKLSGSRFTVMKGPIARLHRALAQFMIDLQTDSHGYTECYVPYAVNADSLKGTGQLPKFEGDLFAAKKGGQDGEPVPDNAALYLIPTAEVPLTNFVRDVVVAEDQLPIKLTAHSPCFRSEAGSYGRDTRGMIRQHQFDKVEMVQIVHPEKSYEALEEMTGHAEAVLQKLGLPYRVMSLCTGDMGFGAAKTYDLEVWLPAQNTYREISSVSNCEAFQARRLQARFKNAQGKNELVHTLNGSGLAVGRTLVAVLENYQNADGSVTIPEALRPYMGGQTLLKA</sequence>
<accession>A9BYK5</accession>
<reference key="1">
    <citation type="submission" date="2007-11" db="EMBL/GenBank/DDBJ databases">
        <title>Complete sequence of Delftia acidovorans DSM 14801 / SPH-1.</title>
        <authorList>
            <person name="Copeland A."/>
            <person name="Lucas S."/>
            <person name="Lapidus A."/>
            <person name="Barry K."/>
            <person name="Glavina del Rio T."/>
            <person name="Dalin E."/>
            <person name="Tice H."/>
            <person name="Pitluck S."/>
            <person name="Lowry S."/>
            <person name="Clum A."/>
            <person name="Schmutz J."/>
            <person name="Larimer F."/>
            <person name="Land M."/>
            <person name="Hauser L."/>
            <person name="Kyrpides N."/>
            <person name="Kim E."/>
            <person name="Schleheck D."/>
            <person name="Richardson P."/>
        </authorList>
    </citation>
    <scope>NUCLEOTIDE SEQUENCE [LARGE SCALE GENOMIC DNA]</scope>
    <source>
        <strain>DSM 14801 / SPH-1</strain>
    </source>
</reference>
<comment type="function">
    <text evidence="1">Catalyzes the attachment of serine to tRNA(Ser). Is also able to aminoacylate tRNA(Sec) with serine, to form the misacylated tRNA L-seryl-tRNA(Sec), which will be further converted into selenocysteinyl-tRNA(Sec).</text>
</comment>
<comment type="catalytic activity">
    <reaction evidence="1">
        <text>tRNA(Ser) + L-serine + ATP = L-seryl-tRNA(Ser) + AMP + diphosphate + H(+)</text>
        <dbReference type="Rhea" id="RHEA:12292"/>
        <dbReference type="Rhea" id="RHEA-COMP:9669"/>
        <dbReference type="Rhea" id="RHEA-COMP:9703"/>
        <dbReference type="ChEBI" id="CHEBI:15378"/>
        <dbReference type="ChEBI" id="CHEBI:30616"/>
        <dbReference type="ChEBI" id="CHEBI:33019"/>
        <dbReference type="ChEBI" id="CHEBI:33384"/>
        <dbReference type="ChEBI" id="CHEBI:78442"/>
        <dbReference type="ChEBI" id="CHEBI:78533"/>
        <dbReference type="ChEBI" id="CHEBI:456215"/>
        <dbReference type="EC" id="6.1.1.11"/>
    </reaction>
</comment>
<comment type="catalytic activity">
    <reaction evidence="1">
        <text>tRNA(Sec) + L-serine + ATP = L-seryl-tRNA(Sec) + AMP + diphosphate + H(+)</text>
        <dbReference type="Rhea" id="RHEA:42580"/>
        <dbReference type="Rhea" id="RHEA-COMP:9742"/>
        <dbReference type="Rhea" id="RHEA-COMP:10128"/>
        <dbReference type="ChEBI" id="CHEBI:15378"/>
        <dbReference type="ChEBI" id="CHEBI:30616"/>
        <dbReference type="ChEBI" id="CHEBI:33019"/>
        <dbReference type="ChEBI" id="CHEBI:33384"/>
        <dbReference type="ChEBI" id="CHEBI:78442"/>
        <dbReference type="ChEBI" id="CHEBI:78533"/>
        <dbReference type="ChEBI" id="CHEBI:456215"/>
        <dbReference type="EC" id="6.1.1.11"/>
    </reaction>
</comment>
<comment type="pathway">
    <text evidence="1">Aminoacyl-tRNA biosynthesis; selenocysteinyl-tRNA(Sec) biosynthesis; L-seryl-tRNA(Sec) from L-serine and tRNA(Sec): step 1/1.</text>
</comment>
<comment type="subunit">
    <text evidence="1">Homodimer. The tRNA molecule binds across the dimer.</text>
</comment>
<comment type="subcellular location">
    <subcellularLocation>
        <location evidence="1">Cytoplasm</location>
    </subcellularLocation>
</comment>
<comment type="domain">
    <text evidence="1">Consists of two distinct domains, a catalytic core and a N-terminal extension that is involved in tRNA binding.</text>
</comment>
<comment type="similarity">
    <text evidence="1">Belongs to the class-II aminoacyl-tRNA synthetase family. Type-1 seryl-tRNA synthetase subfamily.</text>
</comment>
<dbReference type="EC" id="6.1.1.11" evidence="1"/>
<dbReference type="EMBL" id="CP000884">
    <property type="protein sequence ID" value="ABX34548.1"/>
    <property type="molecule type" value="Genomic_DNA"/>
</dbReference>
<dbReference type="RefSeq" id="WP_012203833.1">
    <property type="nucleotide sequence ID" value="NC_010002.1"/>
</dbReference>
<dbReference type="SMR" id="A9BYK5"/>
<dbReference type="STRING" id="398578.Daci_1908"/>
<dbReference type="GeneID" id="24116303"/>
<dbReference type="KEGG" id="dac:Daci_1908"/>
<dbReference type="eggNOG" id="COG0172">
    <property type="taxonomic scope" value="Bacteria"/>
</dbReference>
<dbReference type="HOGENOM" id="CLU_023797_0_1_4"/>
<dbReference type="UniPathway" id="UPA00906">
    <property type="reaction ID" value="UER00895"/>
</dbReference>
<dbReference type="Proteomes" id="UP000000784">
    <property type="component" value="Chromosome"/>
</dbReference>
<dbReference type="GO" id="GO:0005737">
    <property type="term" value="C:cytoplasm"/>
    <property type="evidence" value="ECO:0007669"/>
    <property type="project" value="UniProtKB-SubCell"/>
</dbReference>
<dbReference type="GO" id="GO:0005524">
    <property type="term" value="F:ATP binding"/>
    <property type="evidence" value="ECO:0007669"/>
    <property type="project" value="UniProtKB-UniRule"/>
</dbReference>
<dbReference type="GO" id="GO:0004828">
    <property type="term" value="F:serine-tRNA ligase activity"/>
    <property type="evidence" value="ECO:0007669"/>
    <property type="project" value="UniProtKB-UniRule"/>
</dbReference>
<dbReference type="GO" id="GO:0016260">
    <property type="term" value="P:selenocysteine biosynthetic process"/>
    <property type="evidence" value="ECO:0007669"/>
    <property type="project" value="UniProtKB-UniRule"/>
</dbReference>
<dbReference type="GO" id="GO:0006434">
    <property type="term" value="P:seryl-tRNA aminoacylation"/>
    <property type="evidence" value="ECO:0007669"/>
    <property type="project" value="UniProtKB-UniRule"/>
</dbReference>
<dbReference type="CDD" id="cd00770">
    <property type="entry name" value="SerRS_core"/>
    <property type="match status" value="1"/>
</dbReference>
<dbReference type="Gene3D" id="3.30.930.10">
    <property type="entry name" value="Bira Bifunctional Protein, Domain 2"/>
    <property type="match status" value="1"/>
</dbReference>
<dbReference type="Gene3D" id="1.10.287.40">
    <property type="entry name" value="Serine-tRNA synthetase, tRNA binding domain"/>
    <property type="match status" value="1"/>
</dbReference>
<dbReference type="HAMAP" id="MF_00176">
    <property type="entry name" value="Ser_tRNA_synth_type1"/>
    <property type="match status" value="1"/>
</dbReference>
<dbReference type="InterPro" id="IPR002314">
    <property type="entry name" value="aa-tRNA-synt_IIb"/>
</dbReference>
<dbReference type="InterPro" id="IPR006195">
    <property type="entry name" value="aa-tRNA-synth_II"/>
</dbReference>
<dbReference type="InterPro" id="IPR045864">
    <property type="entry name" value="aa-tRNA-synth_II/BPL/LPL"/>
</dbReference>
<dbReference type="InterPro" id="IPR002317">
    <property type="entry name" value="Ser-tRNA-ligase_type_1"/>
</dbReference>
<dbReference type="InterPro" id="IPR015866">
    <property type="entry name" value="Ser-tRNA-synth_1_N"/>
</dbReference>
<dbReference type="InterPro" id="IPR042103">
    <property type="entry name" value="SerRS_1_N_sf"/>
</dbReference>
<dbReference type="InterPro" id="IPR033729">
    <property type="entry name" value="SerRS_core"/>
</dbReference>
<dbReference type="InterPro" id="IPR010978">
    <property type="entry name" value="tRNA-bd_arm"/>
</dbReference>
<dbReference type="NCBIfam" id="TIGR00414">
    <property type="entry name" value="serS"/>
    <property type="match status" value="1"/>
</dbReference>
<dbReference type="PANTHER" id="PTHR43697:SF1">
    <property type="entry name" value="SERINE--TRNA LIGASE"/>
    <property type="match status" value="1"/>
</dbReference>
<dbReference type="PANTHER" id="PTHR43697">
    <property type="entry name" value="SERYL-TRNA SYNTHETASE"/>
    <property type="match status" value="1"/>
</dbReference>
<dbReference type="Pfam" id="PF02403">
    <property type="entry name" value="Seryl_tRNA_N"/>
    <property type="match status" value="1"/>
</dbReference>
<dbReference type="Pfam" id="PF00587">
    <property type="entry name" value="tRNA-synt_2b"/>
    <property type="match status" value="1"/>
</dbReference>
<dbReference type="PIRSF" id="PIRSF001529">
    <property type="entry name" value="Ser-tRNA-synth_IIa"/>
    <property type="match status" value="1"/>
</dbReference>
<dbReference type="PRINTS" id="PR00981">
    <property type="entry name" value="TRNASYNTHSER"/>
</dbReference>
<dbReference type="SUPFAM" id="SSF55681">
    <property type="entry name" value="Class II aaRS and biotin synthetases"/>
    <property type="match status" value="1"/>
</dbReference>
<dbReference type="SUPFAM" id="SSF46589">
    <property type="entry name" value="tRNA-binding arm"/>
    <property type="match status" value="1"/>
</dbReference>
<dbReference type="PROSITE" id="PS50862">
    <property type="entry name" value="AA_TRNA_LIGASE_II"/>
    <property type="match status" value="1"/>
</dbReference>